<accession>D9I2G1</accession>
<reference key="1">
    <citation type="journal article" date="2010" name="PLoS Pathog.">
        <title>Susceptibility to anthrax lethal toxin-induced rat death is controlled by a single chromosome 10 locus that includes rNlrp1.</title>
        <authorList>
            <person name="Newman Z.L."/>
            <person name="Printz M.P."/>
            <person name="Liu S."/>
            <person name="Crown D."/>
            <person name="Breen L."/>
            <person name="Miller-Randolph S."/>
            <person name="Flodman P."/>
            <person name="Leppla S.H."/>
            <person name="Moayeri M."/>
        </authorList>
    </citation>
    <scope>NUCLEOTIDE SEQUENCE [MRNA]</scope>
    <scope>ACTIVITY REGULATION</scope>
    <source>
        <strain evidence="14">COP</strain>
    </source>
</reference>
<reference key="2">
    <citation type="journal article" date="2019" name="Cell Death Dis.">
        <title>DPP8/9 inhibitors are universal activators of functional NLRP1 alleles.</title>
        <authorList>
            <person name="Gai K."/>
            <person name="Okondo M.C."/>
            <person name="Rao S.D."/>
            <person name="Chui A.J."/>
            <person name="Ball D.P."/>
            <person name="Johnson D.C."/>
            <person name="Bachovchin D.A."/>
        </authorList>
    </citation>
    <scope>FUNCTION</scope>
    <scope>ACTIVITY REGULATION</scope>
</reference>
<reference key="3">
    <citation type="journal article" date="2020" name="Immunol. Rev.">
        <title>The NLRP1 and CARD8 inflammasomes.</title>
        <authorList>
            <person name="Taabazuing C.Y."/>
            <person name="Griswold A.R."/>
            <person name="Bachovchin D.A."/>
        </authorList>
    </citation>
    <scope>REVIEW</scope>
</reference>
<sequence length="1218" mass="138263">MGESQSKQESNTRVAQHGSQQDVDPTFQTKRALERERSSPQVEQSFLGQLQSLLGWSSTSKDVPLSQLIREMDHESRRHSHQSKKKLDRSEHISEGTIPEIYEKRKETISHTQSMEQKYLFQNFTKLLLLQKCCPGGSEKLVRESWHPCVPEEGGHMIEIQDLFDPNLDTEKKPQLVIIEGAAGIGKSTLARQVKRAWDEGQLYRDRFQHVFFFSCRELAQCKQLSLAELIAQGQEVPTAPTRQILSRPEKLLFILDGIDEPAWVLEDQNPELCVHWSQAQPVHTLLGSLLGKSILPEASLMLTARTTALQKLVPSLGQPHRVEVLGFSEFERKDYFYKYFAKERNTIIDFNLIGSIPVLLTLCEVPWVCWLLCTCLEKQMQQGEVLSLTSQTTTALCLKYLSLTIPGQHLSTQLRTLCSLAAEGICQRRTLFSKSDLCKQGLAEDAIATFLKIGVLQRQPSSLSYSFAHLCLQEFFAAMSYILEDSEEAHGDMGNDRTVETLVERYGRQNLFEAPTVRFLLGLLNTREMREMENIFACKFPWETKLKLLRSIIGEPFCQPCHLGLFHCLYENQEEELLTETMLCFPLTASGPNHMEATVFQTNVKRLVIQTDMELMVVTFCITFSHVRSLRLKGKGQQEYKLTAPAMVLYRWTPISEASWKVLFSNLKCTRNLEELDLSGNPLSYSAVRSLCTALRQPGCRLKTLWLVDCGLTSRCCSFLASMLSAHSRLAELDLRLNDLGDNGVRQLCEGLRNPACNLSILRLDQASLSEQVITELRALETKNPKLFISSTWMSHMTMPTENTDGEESLTSSKQQQQQSGDKHMEPLGTDDDFWGPSGPVSTEVVDRERNLYRVRLPMAGSYHCPSTGLHFVVTRAVTIEIGFCAWSQFLHETPLQHSHMVAGPLFDIKAEHGAVTAVCLPHFVSLQEGKVDSSLFHVAHFQDHGMVLETPARVEPHFAVLENPSFSPMGVLLRMIPAVGHFIPITSITLIYYRLYLEDITFHLYLVPNDCTIRKAIDEEELKFQFVRINKPPPVDALYVGSRYIVSSSKEVEILPKELELCYRSPRESQLFSEIYVGNIGSGINLQLTDKKYMNLIWEALLKPGDLRPALPRMASAPKDAPALLHFVDQHREQLVARVTSVDPLLDKLHGLVLSEEDYETVRAEATNQDKMRKLFRGSRSWSWDCKDHFYQALKETHPHLIMDLLEKSGGVSVRL</sequence>
<gene>
    <name evidence="1" type="primary">Nlrp1a</name>
    <name evidence="12" type="synonym">Nlrp1</name>
</gene>
<proteinExistence type="evidence at transcript level"/>
<keyword id="KW-0067">ATP-binding</keyword>
<keyword id="KW-0963">Cytoplasm</keyword>
<keyword id="KW-0378">Hydrolase</keyword>
<keyword id="KW-0391">Immunity</keyword>
<keyword id="KW-1271">Inflammasome</keyword>
<keyword id="KW-0395">Inflammatory response</keyword>
<keyword id="KW-0399">Innate immunity</keyword>
<keyword id="KW-0433">Leucine-rich repeat</keyword>
<keyword id="KW-1210">Necrosis</keyword>
<keyword id="KW-0547">Nucleotide-binding</keyword>
<keyword id="KW-0539">Nucleus</keyword>
<keyword id="KW-0645">Protease</keyword>
<keyword id="KW-0677">Repeat</keyword>
<keyword id="KW-0832">Ubl conjugation</keyword>
<name>NL1A4_RAT</name>
<feature type="chain" id="PRO_0000452887" description="NACHT, LRR and PYD domains-containing protein 1a allele 4">
    <location>
        <begin position="1"/>
        <end position="1218"/>
    </location>
</feature>
<feature type="chain" id="PRO_0000452888" description="NACHT, LRR and PYD domains-containing protein 1a, N-terminus" evidence="4">
    <location>
        <begin position="1"/>
        <end position="968"/>
    </location>
</feature>
<feature type="chain" id="PRO_0000452889" description="NACHT, LRR and PYD domains-containing protein 1a, C-terminus" evidence="4">
    <location>
        <begin position="969"/>
        <end position="1218"/>
    </location>
</feature>
<feature type="domain" description="NACHT" evidence="7">
    <location>
        <begin position="175"/>
        <end position="484"/>
    </location>
</feature>
<feature type="repeat" description="LRR 1" evidence="5">
    <location>
        <begin position="343"/>
        <end position="364"/>
    </location>
</feature>
<feature type="repeat" description="LRR 2" evidence="5">
    <location>
        <begin position="673"/>
        <end position="693"/>
    </location>
</feature>
<feature type="repeat" description="LRR 3" evidence="5">
    <location>
        <begin position="730"/>
        <end position="750"/>
    </location>
</feature>
<feature type="domain" description="FIIND" evidence="8">
    <location>
        <begin position="835"/>
        <end position="1118"/>
    </location>
</feature>
<feature type="domain" description="CARD" evidence="6">
    <location>
        <begin position="1122"/>
        <end position="1211"/>
    </location>
</feature>
<feature type="region of interest" description="Disordered" evidence="9">
    <location>
        <begin position="1"/>
        <end position="44"/>
    </location>
</feature>
<feature type="region of interest" description="Disordered" evidence="9">
    <location>
        <begin position="71"/>
        <end position="91"/>
    </location>
</feature>
<feature type="region of interest" description="Disordered" evidence="9">
    <location>
        <begin position="799"/>
        <end position="842"/>
    </location>
</feature>
<feature type="region of interest" description="ZU5" evidence="4">
    <location>
        <begin position="835"/>
        <end position="968"/>
    </location>
</feature>
<feature type="region of interest" description="UPA" evidence="4">
    <location>
        <begin position="969"/>
        <end position="1118"/>
    </location>
</feature>
<feature type="compositionally biased region" description="Polar residues" evidence="9">
    <location>
        <begin position="1"/>
        <end position="29"/>
    </location>
</feature>
<feature type="compositionally biased region" description="Basic residues" evidence="9">
    <location>
        <begin position="77"/>
        <end position="87"/>
    </location>
</feature>
<feature type="compositionally biased region" description="Polar residues" evidence="9">
    <location>
        <begin position="799"/>
        <end position="815"/>
    </location>
</feature>
<feature type="binding site" evidence="7">
    <location>
        <begin position="181"/>
        <end position="188"/>
    </location>
    <ligand>
        <name>ATP</name>
        <dbReference type="ChEBI" id="CHEBI:30616"/>
    </ligand>
</feature>
<feature type="site" description="Trigger for autolytic processing" evidence="4">
    <location>
        <position position="942"/>
    </location>
</feature>
<feature type="site" description="Cleavage; by autolysis" evidence="8">
    <location>
        <begin position="968"/>
        <end position="969"/>
    </location>
</feature>
<evidence type="ECO:0000250" key="1">
    <source>
        <dbReference type="UniProtKB" id="D9I2F9"/>
    </source>
</evidence>
<evidence type="ECO:0000250" key="2">
    <source>
        <dbReference type="UniProtKB" id="Q2LKU9"/>
    </source>
</evidence>
<evidence type="ECO:0000250" key="3">
    <source>
        <dbReference type="UniProtKB" id="Q2LKW6"/>
    </source>
</evidence>
<evidence type="ECO:0000250" key="4">
    <source>
        <dbReference type="UniProtKB" id="Q9C000"/>
    </source>
</evidence>
<evidence type="ECO:0000255" key="5"/>
<evidence type="ECO:0000255" key="6">
    <source>
        <dbReference type="PROSITE-ProRule" id="PRU00046"/>
    </source>
</evidence>
<evidence type="ECO:0000255" key="7">
    <source>
        <dbReference type="PROSITE-ProRule" id="PRU00136"/>
    </source>
</evidence>
<evidence type="ECO:0000255" key="8">
    <source>
        <dbReference type="PROSITE-ProRule" id="PRU01174"/>
    </source>
</evidence>
<evidence type="ECO:0000256" key="9">
    <source>
        <dbReference type="SAM" id="MobiDB-lite"/>
    </source>
</evidence>
<evidence type="ECO:0000269" key="10">
    <source>
    </source>
</evidence>
<evidence type="ECO:0000269" key="11">
    <source>
    </source>
</evidence>
<evidence type="ECO:0000303" key="12">
    <source>
    </source>
</evidence>
<evidence type="ECO:0000305" key="13"/>
<evidence type="ECO:0000312" key="14">
    <source>
        <dbReference type="EMBL" id="ADI96227.1"/>
    </source>
</evidence>
<comment type="function">
    <text evidence="2 3 4 11">Acts as the sensor component of the Nlrp1a inflammasome, which mediates inflammasome activation in response to various pathogen-associated signals, leading to subsequent pyroptosis (By similarity). Inflammasomes are supramolecular complexes that assemble in the cytosol in response to pathogens and other damage-associated signals and play critical roles in innate immunity and inflammation (By similarity). Acts as a recognition receptor (PRR): recognizes specific pathogens and other damage-associated signals, such as Val-boroPro inhibitor, and mediates the formation of the inflammasome polymeric complex (PubMed:31383852). In response to pathogen-associated signals, the N-terminal part of Nlrp1a is degraded by the proteasome, releasing the cleaved C-terminal part of the protein (NACHT, LRR and PYD domains-containing protein 1a, C-terminus), which polymerizes to initiate the formation of the inflammasome complex: the inflammasome directly recruits pro-caspase-1 (proCASP1) independently of PYCARD/ASC and promotes caspase-1 (CASP1) activation, which subsequently cleaves and activates inflammatory cytokines IL1B and IL18 and gasdermin-D (GSDMD), leading to pyroptosis (By similarity). In the absence of GSDMD expression, the Nlrp1a inflammasome is able to recruit and activate CASP8, leading to activation of gasdermin-E (GSDME) (By similarity).</text>
</comment>
<comment type="function">
    <molecule>NACHT, LRR and PYD domains-containing protein 1a allele 4</molecule>
    <text evidence="4">Constitutes the precursor of the Nlrp1a inflammasome, which mediates autoproteolytic processing within the FIIND domain to generate the N-terminal and C-terminal parts, which are associated non-covalently in absence of pathogens and other damage-associated signals.</text>
</comment>
<comment type="function">
    <molecule>NACHT, LRR and PYD domains-containing protein 1a, N-terminus</molecule>
    <text evidence="4">Regulatory part that prevents formation of the Nlrp1a inflammasome: in absence of pathogens and other damage-associated signals, interacts with the C-terminal part of Nlrp1a (NACHT, LRR and PYD domains-containing protein 1a, C-terminus), preventing activation of the Nlrp1a inflammasome. In response to pathogen-associated signals, this part is ubiquitinated by the N-end rule pathway and degraded by the proteasome, releasing the cleaved C-terminal part of the protein, which polymerizes and forms the Nlrp1a inflammasome.</text>
</comment>
<comment type="function">
    <molecule>NACHT, LRR and PYD domains-containing protein 1a, C-terminus</molecule>
    <text evidence="4">Constitutes the active part of the Nlrp1a inflammasome. In absence of pathogens and other damage-associated signals, interacts with the N-terminal part of Nlrp1a (NACHT, LRR and PYD domains-containing protein 1a, N-terminus), preventing activation of the Nlrp1a inflammasome. In response to pathogen-associated signals, the N-terminal part of Nlrp1a is degraded by the proteasome, releasing this form, which polymerizes to form the Nlrp1a inflammasome complex: the Nlrp1a inflammasome complex then directly recruits pro-caspase-1 (proCASP1) and promotes caspase-1 (CASP1) activation, leading to gasdermin-D (GSDMD) cleavage and subsequent pyroptosis.</text>
</comment>
<comment type="activity regulation">
    <text evidence="1 3 10 11">Activated by pathogens and other damage-associated signals: activation promotes ubiquitination and degradation of the N-terminal part, releasing the cleaved C-terminal part of the protein (NACHT, LRR and PYD domains-containing protein 1a, C-terminus), which polymerizes and forms the Nlrp1a inflammasome (By similarity). Nlrp1a inflammasome is inhibited by DPP8 and DPP9, which sequester the C-terminal fragment of Nlrp1a (NACHT, LRR and PYD domains-containing protein 1a, C-terminus) in a ternary complex, thereby preventing Nlrp1a oligomerization and activation (By similarity). Nlrp1a inflammasome is strongly activated by Val-boroPro (Talabostat, PT-100), an inhibitor of dipeptidyl peptidases DPP8 and DPP9 (PubMed:31383852). Val-boroPro relieves inhibition of DPP8 and/or DPP9 by promoting disruption of the ternary complex, releasing its C-terminal part from autoinhibition (By similarity). Not activated by cleavage by B.anthracis lethal toxin (LT) endopeptidase (PubMed:20502689).</text>
</comment>
<comment type="subunit">
    <text evidence="1 4">Interacts (via LRR repeats) with BCL2 and BCL2L1 (via the loop between motifs BH4 and BH3). Interacts with NOD2; this interaction is enhanced in the presence of muramyl dipeptide (MDP) and increases IL1B release. Interacts with EIF2AK2/PKR; this interaction requires EIF2AK2 activity, is accompanied by EIF2AK2 autophosphorylation and promotes inflammasome assembly in response to danger-associated signals. Interacts with MEFV; this interaction targets Nlrp1a to degradation by autophagy, hence preventing excessive IL1B- and IL18-mediated inflammation. Interacts with DPP9; leading to inhibit activation of the inflammasome (By similarity). DPP9 acts via formation of a ternary complex, composed of a DPP9 homodimer, one full-length NLRP1 protein, and one cleaved C-terminus of Nlrp1a (NACHT, LRR and PYD domains-containing protein 1a, C-terminus) (By similarity). Interacts with DPP8; leading to inhibit activation of the inflammasome, probably via formation of a ternary complex with DPP8 (By similarity).</text>
</comment>
<comment type="subunit">
    <molecule>NACHT, LRR and PYD domains-containing protein 1a, N-terminus</molecule>
    <text evidence="4">Interacts with the C-terminal part of Nlrp1a (NACHT, LRR and PYD domains-containing protein 1a, C-terminus) in absence of pathogens and other damage-associated signals.</text>
</comment>
<comment type="subunit">
    <molecule>NACHT, LRR and PYD domains-containing protein 1a, C-terminus</molecule>
    <text evidence="4">Interacts with the N-terminal part of Nlrp1a (NACHT, LRR and PYD domains-containing protein 1a, N-terminus) in absence of pathogens and other damage-associated signals (By similarity). Homomultimer; forms the Nlrp1a inflammasome polymeric complex, a filament composed of homopolymers of this form in response to pathogens and other damage-associated signals (By similarity). The Nlrp1a inflammasome polymeric complex directly recruits pro-caspase-1 (proCASP1) independently of PYCARD/ASC (By similarity). Interacts (via CARD domain) with CASP1 (via CARD domain); leading to CASP1 activation (By similarity).</text>
</comment>
<comment type="subcellular location">
    <subcellularLocation>
        <location evidence="4">Cytoplasm</location>
        <location evidence="4">Cytosol</location>
    </subcellularLocation>
    <subcellularLocation>
        <location evidence="4">Cytoplasm</location>
    </subcellularLocation>
    <subcellularLocation>
        <location evidence="4">Nucleus</location>
    </subcellularLocation>
</comment>
<comment type="subcellular location">
    <molecule>NACHT, LRR and PYD domains-containing protein 1a, C-terminus</molecule>
    <subcellularLocation>
        <location evidence="4">Inflammasome</location>
    </subcellularLocation>
</comment>
<comment type="domain">
    <text evidence="3">The leucine-rich repeat (LRR) domain may be involved in autoinhibition in the absence of activating signal, possibly through intramolecular interaction with the NACHT domain.</text>
</comment>
<comment type="domain">
    <text evidence="3">The FIIND (domain with function to find) region is involved in homomerization, but not in CASP1-binding. Autocatalytic cleavage in this region occurs constitutively, prior to activation signals, and is required for inflammasome activity (IL1B release), possibly by facilitating CASP1 binding. Both N- and C-terminal fragments remain associated.</text>
</comment>
<comment type="domain">
    <molecule>NACHT, LRR and PYD domains-containing protein 1a, C-terminus</molecule>
    <text evidence="4">The C-terminal part of Nlrp1a oligomerizes to form the core of the Nlrp1a inflammasome filament: in the filament, the CARD domains form a central helical filaments that are promoted by oligomerized, but flexibly linked, UPA regions surrounding the filaments. The UPA region reduces the threshold needed for filament formation and signaling.</text>
</comment>
<comment type="PTM">
    <molecule>NACHT, LRR and PYD domains-containing protein 1a allele 4</molecule>
    <text evidence="4">Autocatalytically cleaved. Autocatalytic cleavage in FIIND region occurs constitutively, prior to activation signals, and is required for inflammasome activity (IL1B release), possibly by facilitating CASP1 binding. Both N- and C-terminal parts remain associated non-covalently.</text>
</comment>
<comment type="PTM">
    <molecule>NACHT, LRR and PYD domains-containing protein 1a, N-terminus</molecule>
    <text evidence="4">Ubiquitinated in response to pathogen-associated signals, leading to its degradation by the proteasome and subsequent release of the cleaved C-terminal part of the protein (NACHT, LRR and PYD domains-containing protein 1a, C-terminus), which polymerizes and forms the Nlrp1a inflammasome.</text>
</comment>
<comment type="polymorphism">
    <text evidence="10">Nlrp1a gene is extremely polymorphic. 5 alleles have been described: 1 (AC D9I2F9), 2 (AC D9I2G3), 3 (AC D9I2H0), 4 (this entry) and 5 (AC D9I2G4).</text>
</comment>
<comment type="similarity">
    <text evidence="13">Belongs to the NLRP family.</text>
</comment>
<dbReference type="EC" id="3.4.-.-" evidence="4"/>
<dbReference type="EMBL" id="HM060630">
    <property type="protein sequence ID" value="ADI96227.1"/>
    <property type="molecule type" value="mRNA"/>
</dbReference>
<dbReference type="SMR" id="D9I2G1"/>
<dbReference type="AGR" id="RGD:1310963"/>
<dbReference type="RGD" id="1310963">
    <property type="gene designation" value="Nlrp1a"/>
</dbReference>
<dbReference type="GO" id="GO:0005829">
    <property type="term" value="C:cytosol"/>
    <property type="evidence" value="ECO:0000266"/>
    <property type="project" value="RGD"/>
</dbReference>
<dbReference type="GO" id="GO:0043025">
    <property type="term" value="C:neuronal cell body"/>
    <property type="evidence" value="ECO:0000314"/>
    <property type="project" value="RGD"/>
</dbReference>
<dbReference type="GO" id="GO:0072558">
    <property type="term" value="C:NLRP1 inflammasome complex"/>
    <property type="evidence" value="ECO:0000266"/>
    <property type="project" value="RGD"/>
</dbReference>
<dbReference type="GO" id="GO:0072559">
    <property type="term" value="C:NLRP3 inflammasome complex"/>
    <property type="evidence" value="ECO:0000318"/>
    <property type="project" value="GO_Central"/>
</dbReference>
<dbReference type="GO" id="GO:0005634">
    <property type="term" value="C:nucleus"/>
    <property type="evidence" value="ECO:0000266"/>
    <property type="project" value="RGD"/>
</dbReference>
<dbReference type="GO" id="GO:0032991">
    <property type="term" value="C:protein-containing complex"/>
    <property type="evidence" value="ECO:0000314"/>
    <property type="project" value="RGD"/>
</dbReference>
<dbReference type="GO" id="GO:0005524">
    <property type="term" value="F:ATP binding"/>
    <property type="evidence" value="ECO:0000266"/>
    <property type="project" value="RGD"/>
</dbReference>
<dbReference type="GO" id="GO:0016887">
    <property type="term" value="F:ATP hydrolysis activity"/>
    <property type="evidence" value="ECO:0000266"/>
    <property type="project" value="RGD"/>
</dbReference>
<dbReference type="GO" id="GO:0140608">
    <property type="term" value="F:cysteine-type endopeptidase activator activity"/>
    <property type="evidence" value="ECO:0000266"/>
    <property type="project" value="RGD"/>
</dbReference>
<dbReference type="GO" id="GO:0003690">
    <property type="term" value="F:double-stranded DNA binding"/>
    <property type="evidence" value="ECO:0000266"/>
    <property type="project" value="RGD"/>
</dbReference>
<dbReference type="GO" id="GO:0003725">
    <property type="term" value="F:double-stranded RNA binding"/>
    <property type="evidence" value="ECO:0000266"/>
    <property type="project" value="RGD"/>
</dbReference>
<dbReference type="GO" id="GO:0019899">
    <property type="term" value="F:enzyme binding"/>
    <property type="evidence" value="ECO:0000266"/>
    <property type="project" value="RGD"/>
</dbReference>
<dbReference type="GO" id="GO:0140693">
    <property type="term" value="F:molecular condensate scaffold activity"/>
    <property type="evidence" value="ECO:0000266"/>
    <property type="project" value="RGD"/>
</dbReference>
<dbReference type="GO" id="GO:0038187">
    <property type="term" value="F:pattern recognition receptor activity"/>
    <property type="evidence" value="ECO:0000266"/>
    <property type="project" value="RGD"/>
</dbReference>
<dbReference type="GO" id="GO:0008233">
    <property type="term" value="F:peptidase activity"/>
    <property type="evidence" value="ECO:0007669"/>
    <property type="project" value="UniProtKB-KW"/>
</dbReference>
<dbReference type="GO" id="GO:0019904">
    <property type="term" value="F:protein domain specific binding"/>
    <property type="evidence" value="ECO:0000266"/>
    <property type="project" value="RGD"/>
</dbReference>
<dbReference type="GO" id="GO:0097110">
    <property type="term" value="F:scaffold protein binding"/>
    <property type="evidence" value="ECO:0000353"/>
    <property type="project" value="RGD"/>
</dbReference>
<dbReference type="GO" id="GO:0035591">
    <property type="term" value="F:signaling adaptor activity"/>
    <property type="evidence" value="ECO:0000266"/>
    <property type="project" value="RGD"/>
</dbReference>
<dbReference type="GO" id="GO:0002218">
    <property type="term" value="P:activation of innate immune response"/>
    <property type="evidence" value="ECO:0000318"/>
    <property type="project" value="GO_Central"/>
</dbReference>
<dbReference type="GO" id="GO:0140374">
    <property type="term" value="P:antiviral innate immune response"/>
    <property type="evidence" value="ECO:0000266"/>
    <property type="project" value="RGD"/>
</dbReference>
<dbReference type="GO" id="GO:0071493">
    <property type="term" value="P:cellular response to UV-B"/>
    <property type="evidence" value="ECO:0000266"/>
    <property type="project" value="RGD"/>
</dbReference>
<dbReference type="GO" id="GO:0042742">
    <property type="term" value="P:defense response to bacterium"/>
    <property type="evidence" value="ECO:0000266"/>
    <property type="project" value="RGD"/>
</dbReference>
<dbReference type="GO" id="GO:0051607">
    <property type="term" value="P:defense response to virus"/>
    <property type="evidence" value="ECO:0000266"/>
    <property type="project" value="RGD"/>
</dbReference>
<dbReference type="GO" id="GO:0006954">
    <property type="term" value="P:inflammatory response"/>
    <property type="evidence" value="ECO:0000318"/>
    <property type="project" value="GO_Central"/>
</dbReference>
<dbReference type="GO" id="GO:0097193">
    <property type="term" value="P:intrinsic apoptotic signaling pathway"/>
    <property type="evidence" value="ECO:0000318"/>
    <property type="project" value="GO_Central"/>
</dbReference>
<dbReference type="GO" id="GO:0051245">
    <property type="term" value="P:negative regulation of cellular defense response"/>
    <property type="evidence" value="ECO:0000315"/>
    <property type="project" value="RGD"/>
</dbReference>
<dbReference type="GO" id="GO:0051402">
    <property type="term" value="P:neuron apoptotic process"/>
    <property type="evidence" value="ECO:0000266"/>
    <property type="project" value="RGD"/>
</dbReference>
<dbReference type="GO" id="GO:1904784">
    <property type="term" value="P:NLRP1 inflammasome complex assembly"/>
    <property type="evidence" value="ECO:0000266"/>
    <property type="project" value="RGD"/>
</dbReference>
<dbReference type="GO" id="GO:0050729">
    <property type="term" value="P:positive regulation of inflammatory response"/>
    <property type="evidence" value="ECO:0000266"/>
    <property type="project" value="RGD"/>
</dbReference>
<dbReference type="GO" id="GO:0032731">
    <property type="term" value="P:positive regulation of interleukin-1 beta production"/>
    <property type="evidence" value="ECO:0000266"/>
    <property type="project" value="RGD"/>
</dbReference>
<dbReference type="GO" id="GO:0140639">
    <property type="term" value="P:positive regulation of pyroptotic inflammatory response"/>
    <property type="evidence" value="ECO:0000315"/>
    <property type="project" value="RGD"/>
</dbReference>
<dbReference type="GO" id="GO:0097300">
    <property type="term" value="P:programmed necrotic cell death"/>
    <property type="evidence" value="ECO:0000266"/>
    <property type="project" value="RGD"/>
</dbReference>
<dbReference type="GO" id="GO:0051260">
    <property type="term" value="P:protein homooligomerization"/>
    <property type="evidence" value="ECO:0000266"/>
    <property type="project" value="RGD"/>
</dbReference>
<dbReference type="GO" id="GO:0070269">
    <property type="term" value="P:pyroptotic inflammatory response"/>
    <property type="evidence" value="ECO:0000266"/>
    <property type="project" value="RGD"/>
</dbReference>
<dbReference type="GO" id="GO:0042981">
    <property type="term" value="P:regulation of apoptotic process"/>
    <property type="evidence" value="ECO:0007669"/>
    <property type="project" value="InterPro"/>
</dbReference>
<dbReference type="GO" id="GO:0050727">
    <property type="term" value="P:regulation of inflammatory response"/>
    <property type="evidence" value="ECO:0000266"/>
    <property type="project" value="RGD"/>
</dbReference>
<dbReference type="GO" id="GO:0032495">
    <property type="term" value="P:response to muramyl dipeptide"/>
    <property type="evidence" value="ECO:0000266"/>
    <property type="project" value="RGD"/>
</dbReference>
<dbReference type="GO" id="GO:0097264">
    <property type="term" value="P:self proteolysis"/>
    <property type="evidence" value="ECO:0000266"/>
    <property type="project" value="RGD"/>
</dbReference>
<dbReference type="GO" id="GO:0007165">
    <property type="term" value="P:signal transduction"/>
    <property type="evidence" value="ECO:0000266"/>
    <property type="project" value="RGD"/>
</dbReference>
<dbReference type="CDD" id="cd08330">
    <property type="entry name" value="CARD_ASC_NALP1"/>
    <property type="match status" value="1"/>
</dbReference>
<dbReference type="FunFam" id="1.10.533.10:FF:000013">
    <property type="entry name" value="Apoptosis-associated speck-like protein containing a CARD"/>
    <property type="match status" value="1"/>
</dbReference>
<dbReference type="FunFam" id="3.40.50.300:FF:000897">
    <property type="entry name" value="NLR family pyrin domain containing 1"/>
    <property type="match status" value="1"/>
</dbReference>
<dbReference type="Gene3D" id="1.10.533.10">
    <property type="entry name" value="Death Domain, Fas"/>
    <property type="match status" value="1"/>
</dbReference>
<dbReference type="Gene3D" id="3.40.50.300">
    <property type="entry name" value="P-loop containing nucleotide triphosphate hydrolases"/>
    <property type="match status" value="1"/>
</dbReference>
<dbReference type="Gene3D" id="3.80.10.10">
    <property type="entry name" value="Ribonuclease Inhibitor"/>
    <property type="match status" value="1"/>
</dbReference>
<dbReference type="InterPro" id="IPR001315">
    <property type="entry name" value="CARD"/>
</dbReference>
<dbReference type="InterPro" id="IPR033516">
    <property type="entry name" value="CARD8/ASC/NALP1_CARD"/>
</dbReference>
<dbReference type="InterPro" id="IPR011029">
    <property type="entry name" value="DEATH-like_dom_sf"/>
</dbReference>
<dbReference type="InterPro" id="IPR025307">
    <property type="entry name" value="FIIND_dom"/>
</dbReference>
<dbReference type="InterPro" id="IPR001611">
    <property type="entry name" value="Leu-rich_rpt"/>
</dbReference>
<dbReference type="InterPro" id="IPR032675">
    <property type="entry name" value="LRR_dom_sf"/>
</dbReference>
<dbReference type="InterPro" id="IPR007111">
    <property type="entry name" value="NACHT_NTPase"/>
</dbReference>
<dbReference type="InterPro" id="IPR041267">
    <property type="entry name" value="NLRP_HD2"/>
</dbReference>
<dbReference type="InterPro" id="IPR051249">
    <property type="entry name" value="NLRP_Inflammasome"/>
</dbReference>
<dbReference type="InterPro" id="IPR041075">
    <property type="entry name" value="NOD1/2_WH"/>
</dbReference>
<dbReference type="InterPro" id="IPR027417">
    <property type="entry name" value="P-loop_NTPase"/>
</dbReference>
<dbReference type="PANTHER" id="PTHR46985">
    <property type="entry name" value="NACHT, LRR AND PYD DOMAINS-CONTAINING PROTEIN 1"/>
    <property type="match status" value="1"/>
</dbReference>
<dbReference type="PANTHER" id="PTHR46985:SF3">
    <property type="entry name" value="NACHT, LRR AND PYD DOMAINS-CONTAINING PROTEIN 1"/>
    <property type="match status" value="1"/>
</dbReference>
<dbReference type="Pfam" id="PF00619">
    <property type="entry name" value="CARD"/>
    <property type="match status" value="1"/>
</dbReference>
<dbReference type="Pfam" id="PF13553">
    <property type="entry name" value="FIIND"/>
    <property type="match status" value="1"/>
</dbReference>
<dbReference type="Pfam" id="PF13516">
    <property type="entry name" value="LRR_6"/>
    <property type="match status" value="2"/>
</dbReference>
<dbReference type="Pfam" id="PF05729">
    <property type="entry name" value="NACHT"/>
    <property type="match status" value="1"/>
</dbReference>
<dbReference type="Pfam" id="PF17776">
    <property type="entry name" value="NLRC4_HD2"/>
    <property type="match status" value="1"/>
</dbReference>
<dbReference type="Pfam" id="PF17779">
    <property type="entry name" value="NOD2_WH"/>
    <property type="match status" value="1"/>
</dbReference>
<dbReference type="Pfam" id="PF23679">
    <property type="entry name" value="UPA-FIIND"/>
    <property type="match status" value="1"/>
</dbReference>
<dbReference type="PRINTS" id="PR00364">
    <property type="entry name" value="DISEASERSIST"/>
</dbReference>
<dbReference type="SMART" id="SM00368">
    <property type="entry name" value="LRR_RI"/>
    <property type="match status" value="3"/>
</dbReference>
<dbReference type="SUPFAM" id="SSF47986">
    <property type="entry name" value="DEATH domain"/>
    <property type="match status" value="1"/>
</dbReference>
<dbReference type="SUPFAM" id="SSF52540">
    <property type="entry name" value="P-loop containing nucleoside triphosphate hydrolases"/>
    <property type="match status" value="1"/>
</dbReference>
<dbReference type="SUPFAM" id="SSF52047">
    <property type="entry name" value="RNI-like"/>
    <property type="match status" value="1"/>
</dbReference>
<dbReference type="PROSITE" id="PS50209">
    <property type="entry name" value="CARD"/>
    <property type="match status" value="1"/>
</dbReference>
<dbReference type="PROSITE" id="PS51830">
    <property type="entry name" value="FIIND"/>
    <property type="match status" value="1"/>
</dbReference>
<dbReference type="PROSITE" id="PS50837">
    <property type="entry name" value="NACHT"/>
    <property type="match status" value="1"/>
</dbReference>
<protein>
    <recommendedName>
        <fullName evidence="13">NACHT, LRR and PYD domains-containing protein 1a allele 4</fullName>
        <ecNumber evidence="4">3.4.-.-</ecNumber>
    </recommendedName>
    <component>
        <recommendedName>
            <fullName evidence="13">NACHT, LRR and PYD domains-containing protein 1a, C-terminus</fullName>
            <shortName evidence="4">Nlrp1a-CT</shortName>
        </recommendedName>
    </component>
    <component>
        <recommendedName>
            <fullName evidence="13">NACHT, LRR and PYD domains-containing protein 1a, N-terminus</fullName>
            <shortName evidence="4">Nlrp1a-NT</shortName>
        </recommendedName>
    </component>
</protein>
<organism>
    <name type="scientific">Rattus norvegicus</name>
    <name type="common">Rat</name>
    <dbReference type="NCBI Taxonomy" id="10116"/>
    <lineage>
        <taxon>Eukaryota</taxon>
        <taxon>Metazoa</taxon>
        <taxon>Chordata</taxon>
        <taxon>Craniata</taxon>
        <taxon>Vertebrata</taxon>
        <taxon>Euteleostomi</taxon>
        <taxon>Mammalia</taxon>
        <taxon>Eutheria</taxon>
        <taxon>Euarchontoglires</taxon>
        <taxon>Glires</taxon>
        <taxon>Rodentia</taxon>
        <taxon>Myomorpha</taxon>
        <taxon>Muroidea</taxon>
        <taxon>Muridae</taxon>
        <taxon>Murinae</taxon>
        <taxon>Rattus</taxon>
    </lineage>
</organism>